<sequence>MRILGIDPGLRVTGFGVIDQSGHQLTYVTSGVIKTADADLPTRLGTIFEGISTLIRQHAPDHSAIEKVFVNVNPQSTLLLGQARGAAICGLVSGGVPVAEYTALQLKQAVVGYGRATKEQMQQMVVRLLCLSGIPSTDAADALGMAICHAHGGGTLSTLGGIAPGLAKKGLRVRRGRLVG</sequence>
<feature type="chain" id="PRO_1000090509" description="Crossover junction endodeoxyribonuclease RuvC">
    <location>
        <begin position="1"/>
        <end position="180"/>
    </location>
</feature>
<feature type="active site" evidence="1">
    <location>
        <position position="7"/>
    </location>
</feature>
<feature type="active site" evidence="1">
    <location>
        <position position="66"/>
    </location>
</feature>
<feature type="active site" evidence="1">
    <location>
        <position position="138"/>
    </location>
</feature>
<feature type="binding site" evidence="1">
    <location>
        <position position="7"/>
    </location>
    <ligand>
        <name>Mg(2+)</name>
        <dbReference type="ChEBI" id="CHEBI:18420"/>
        <label>1</label>
    </ligand>
</feature>
<feature type="binding site" evidence="1">
    <location>
        <position position="66"/>
    </location>
    <ligand>
        <name>Mg(2+)</name>
        <dbReference type="ChEBI" id="CHEBI:18420"/>
        <label>2</label>
    </ligand>
</feature>
<feature type="binding site" evidence="1">
    <location>
        <position position="138"/>
    </location>
    <ligand>
        <name>Mg(2+)</name>
        <dbReference type="ChEBI" id="CHEBI:18420"/>
        <label>1</label>
    </ligand>
</feature>
<dbReference type="EC" id="3.1.21.10" evidence="1"/>
<dbReference type="EMBL" id="CP001043">
    <property type="protein sequence ID" value="ACC71726.1"/>
    <property type="molecule type" value="Genomic_DNA"/>
</dbReference>
<dbReference type="RefSeq" id="WP_012401929.1">
    <property type="nucleotide sequence ID" value="NC_010622.1"/>
</dbReference>
<dbReference type="SMR" id="B2JGU2"/>
<dbReference type="STRING" id="391038.Bphy_2554"/>
<dbReference type="KEGG" id="bph:Bphy_2554"/>
<dbReference type="eggNOG" id="COG0817">
    <property type="taxonomic scope" value="Bacteria"/>
</dbReference>
<dbReference type="HOGENOM" id="CLU_091257_2_0_4"/>
<dbReference type="OrthoDB" id="9805499at2"/>
<dbReference type="Proteomes" id="UP000001192">
    <property type="component" value="Chromosome 1"/>
</dbReference>
<dbReference type="GO" id="GO:0005737">
    <property type="term" value="C:cytoplasm"/>
    <property type="evidence" value="ECO:0007669"/>
    <property type="project" value="UniProtKB-SubCell"/>
</dbReference>
<dbReference type="GO" id="GO:0048476">
    <property type="term" value="C:Holliday junction resolvase complex"/>
    <property type="evidence" value="ECO:0007669"/>
    <property type="project" value="UniProtKB-UniRule"/>
</dbReference>
<dbReference type="GO" id="GO:0008821">
    <property type="term" value="F:crossover junction DNA endonuclease activity"/>
    <property type="evidence" value="ECO:0007669"/>
    <property type="project" value="UniProtKB-UniRule"/>
</dbReference>
<dbReference type="GO" id="GO:0003677">
    <property type="term" value="F:DNA binding"/>
    <property type="evidence" value="ECO:0007669"/>
    <property type="project" value="UniProtKB-KW"/>
</dbReference>
<dbReference type="GO" id="GO:0000287">
    <property type="term" value="F:magnesium ion binding"/>
    <property type="evidence" value="ECO:0007669"/>
    <property type="project" value="UniProtKB-UniRule"/>
</dbReference>
<dbReference type="GO" id="GO:0006310">
    <property type="term" value="P:DNA recombination"/>
    <property type="evidence" value="ECO:0007669"/>
    <property type="project" value="UniProtKB-UniRule"/>
</dbReference>
<dbReference type="GO" id="GO:0006281">
    <property type="term" value="P:DNA repair"/>
    <property type="evidence" value="ECO:0007669"/>
    <property type="project" value="UniProtKB-UniRule"/>
</dbReference>
<dbReference type="CDD" id="cd16962">
    <property type="entry name" value="RuvC"/>
    <property type="match status" value="1"/>
</dbReference>
<dbReference type="FunFam" id="3.30.420.10:FF:000002">
    <property type="entry name" value="Crossover junction endodeoxyribonuclease RuvC"/>
    <property type="match status" value="1"/>
</dbReference>
<dbReference type="Gene3D" id="3.30.420.10">
    <property type="entry name" value="Ribonuclease H-like superfamily/Ribonuclease H"/>
    <property type="match status" value="1"/>
</dbReference>
<dbReference type="HAMAP" id="MF_00034">
    <property type="entry name" value="RuvC"/>
    <property type="match status" value="1"/>
</dbReference>
<dbReference type="InterPro" id="IPR012337">
    <property type="entry name" value="RNaseH-like_sf"/>
</dbReference>
<dbReference type="InterPro" id="IPR036397">
    <property type="entry name" value="RNaseH_sf"/>
</dbReference>
<dbReference type="InterPro" id="IPR020563">
    <property type="entry name" value="X-over_junc_endoDNase_Mg_BS"/>
</dbReference>
<dbReference type="InterPro" id="IPR002176">
    <property type="entry name" value="X-over_junc_endoDNase_RuvC"/>
</dbReference>
<dbReference type="NCBIfam" id="TIGR00228">
    <property type="entry name" value="ruvC"/>
    <property type="match status" value="1"/>
</dbReference>
<dbReference type="PANTHER" id="PTHR30194">
    <property type="entry name" value="CROSSOVER JUNCTION ENDODEOXYRIBONUCLEASE RUVC"/>
    <property type="match status" value="1"/>
</dbReference>
<dbReference type="PANTHER" id="PTHR30194:SF3">
    <property type="entry name" value="CROSSOVER JUNCTION ENDODEOXYRIBONUCLEASE RUVC"/>
    <property type="match status" value="1"/>
</dbReference>
<dbReference type="Pfam" id="PF02075">
    <property type="entry name" value="RuvC"/>
    <property type="match status" value="1"/>
</dbReference>
<dbReference type="PRINTS" id="PR00696">
    <property type="entry name" value="RSOLVASERUVC"/>
</dbReference>
<dbReference type="SUPFAM" id="SSF53098">
    <property type="entry name" value="Ribonuclease H-like"/>
    <property type="match status" value="1"/>
</dbReference>
<dbReference type="PROSITE" id="PS01321">
    <property type="entry name" value="RUVC"/>
    <property type="match status" value="1"/>
</dbReference>
<proteinExistence type="inferred from homology"/>
<comment type="function">
    <text evidence="1">The RuvA-RuvB-RuvC complex processes Holliday junction (HJ) DNA during genetic recombination and DNA repair. Endonuclease that resolves HJ intermediates. Cleaves cruciform DNA by making single-stranded nicks across the HJ at symmetrical positions within the homologous arms, yielding a 5'-phosphate and a 3'-hydroxyl group; requires a central core of homology in the junction. The consensus cleavage sequence is 5'-(A/T)TT(C/G)-3'. Cleavage occurs on the 3'-side of the TT dinucleotide at the point of strand exchange. HJ branch migration catalyzed by RuvA-RuvB allows RuvC to scan DNA until it finds its consensus sequence, where it cleaves and resolves the cruciform DNA.</text>
</comment>
<comment type="catalytic activity">
    <reaction evidence="1">
        <text>Endonucleolytic cleavage at a junction such as a reciprocal single-stranded crossover between two homologous DNA duplexes (Holliday junction).</text>
        <dbReference type="EC" id="3.1.21.10"/>
    </reaction>
</comment>
<comment type="cofactor">
    <cofactor evidence="1">
        <name>Mg(2+)</name>
        <dbReference type="ChEBI" id="CHEBI:18420"/>
    </cofactor>
    <text evidence="1">Binds 2 Mg(2+) ion per subunit.</text>
</comment>
<comment type="subunit">
    <text evidence="1">Homodimer which binds Holliday junction (HJ) DNA. The HJ becomes 2-fold symmetrical on binding to RuvC with unstacked arms; it has a different conformation from HJ DNA in complex with RuvA. In the full resolvosome a probable DNA-RuvA(4)-RuvB(12)-RuvC(2) complex forms which resolves the HJ.</text>
</comment>
<comment type="subcellular location">
    <subcellularLocation>
        <location evidence="1">Cytoplasm</location>
    </subcellularLocation>
</comment>
<comment type="similarity">
    <text evidence="1">Belongs to the RuvC family.</text>
</comment>
<gene>
    <name evidence="1" type="primary">ruvC</name>
    <name type="ordered locus">Bphy_2554</name>
</gene>
<accession>B2JGU2</accession>
<organism>
    <name type="scientific">Paraburkholderia phymatum (strain DSM 17167 / CIP 108236 / LMG 21445 / STM815)</name>
    <name type="common">Burkholderia phymatum</name>
    <dbReference type="NCBI Taxonomy" id="391038"/>
    <lineage>
        <taxon>Bacteria</taxon>
        <taxon>Pseudomonadati</taxon>
        <taxon>Pseudomonadota</taxon>
        <taxon>Betaproteobacteria</taxon>
        <taxon>Burkholderiales</taxon>
        <taxon>Burkholderiaceae</taxon>
        <taxon>Paraburkholderia</taxon>
    </lineage>
</organism>
<keyword id="KW-0963">Cytoplasm</keyword>
<keyword id="KW-0227">DNA damage</keyword>
<keyword id="KW-0233">DNA recombination</keyword>
<keyword id="KW-0234">DNA repair</keyword>
<keyword id="KW-0238">DNA-binding</keyword>
<keyword id="KW-0255">Endonuclease</keyword>
<keyword id="KW-0378">Hydrolase</keyword>
<keyword id="KW-0460">Magnesium</keyword>
<keyword id="KW-0479">Metal-binding</keyword>
<keyword id="KW-0540">Nuclease</keyword>
<keyword id="KW-1185">Reference proteome</keyword>
<reference key="1">
    <citation type="journal article" date="2014" name="Stand. Genomic Sci.">
        <title>Complete genome sequence of Burkholderia phymatum STM815(T), a broad host range and efficient nitrogen-fixing symbiont of Mimosa species.</title>
        <authorList>
            <person name="Moulin L."/>
            <person name="Klonowska A."/>
            <person name="Caroline B."/>
            <person name="Booth K."/>
            <person name="Vriezen J.A."/>
            <person name="Melkonian R."/>
            <person name="James E.K."/>
            <person name="Young J.P."/>
            <person name="Bena G."/>
            <person name="Hauser L."/>
            <person name="Land M."/>
            <person name="Kyrpides N."/>
            <person name="Bruce D."/>
            <person name="Chain P."/>
            <person name="Copeland A."/>
            <person name="Pitluck S."/>
            <person name="Woyke T."/>
            <person name="Lizotte-Waniewski M."/>
            <person name="Bristow J."/>
            <person name="Riley M."/>
        </authorList>
    </citation>
    <scope>NUCLEOTIDE SEQUENCE [LARGE SCALE GENOMIC DNA]</scope>
    <source>
        <strain>DSM 17167 / CIP 108236 / LMG 21445 / STM815</strain>
    </source>
</reference>
<name>RUVC_PARP8</name>
<evidence type="ECO:0000255" key="1">
    <source>
        <dbReference type="HAMAP-Rule" id="MF_00034"/>
    </source>
</evidence>
<protein>
    <recommendedName>
        <fullName evidence="1">Crossover junction endodeoxyribonuclease RuvC</fullName>
        <ecNumber evidence="1">3.1.21.10</ecNumber>
    </recommendedName>
    <alternativeName>
        <fullName evidence="1">Holliday junction nuclease RuvC</fullName>
    </alternativeName>
    <alternativeName>
        <fullName evidence="1">Holliday junction resolvase RuvC</fullName>
    </alternativeName>
</protein>